<protein>
    <recommendedName>
        <fullName evidence="1">Histidine--tRNA ligase</fullName>
        <ecNumber evidence="1">6.1.1.21</ecNumber>
    </recommendedName>
    <alternativeName>
        <fullName evidence="1">Histidyl-tRNA synthetase</fullName>
        <shortName evidence="1">HisRS</shortName>
    </alternativeName>
</protein>
<dbReference type="EC" id="6.1.1.21" evidence="1"/>
<dbReference type="EMBL" id="AP009179">
    <property type="protein sequence ID" value="BAF72308.1"/>
    <property type="molecule type" value="Genomic_DNA"/>
</dbReference>
<dbReference type="RefSeq" id="WP_011981041.1">
    <property type="nucleotide sequence ID" value="NC_009663.1"/>
</dbReference>
<dbReference type="SMR" id="A6Q9Z9"/>
<dbReference type="STRING" id="387093.SUN_1355"/>
<dbReference type="KEGG" id="sun:SUN_1355"/>
<dbReference type="eggNOG" id="COG0124">
    <property type="taxonomic scope" value="Bacteria"/>
</dbReference>
<dbReference type="HOGENOM" id="CLU_025113_1_1_7"/>
<dbReference type="OrthoDB" id="9800814at2"/>
<dbReference type="Proteomes" id="UP000006378">
    <property type="component" value="Chromosome"/>
</dbReference>
<dbReference type="GO" id="GO:0005737">
    <property type="term" value="C:cytoplasm"/>
    <property type="evidence" value="ECO:0007669"/>
    <property type="project" value="UniProtKB-SubCell"/>
</dbReference>
<dbReference type="GO" id="GO:0005524">
    <property type="term" value="F:ATP binding"/>
    <property type="evidence" value="ECO:0007669"/>
    <property type="project" value="UniProtKB-UniRule"/>
</dbReference>
<dbReference type="GO" id="GO:0004821">
    <property type="term" value="F:histidine-tRNA ligase activity"/>
    <property type="evidence" value="ECO:0007669"/>
    <property type="project" value="UniProtKB-UniRule"/>
</dbReference>
<dbReference type="GO" id="GO:0006427">
    <property type="term" value="P:histidyl-tRNA aminoacylation"/>
    <property type="evidence" value="ECO:0007669"/>
    <property type="project" value="UniProtKB-UniRule"/>
</dbReference>
<dbReference type="CDD" id="cd00773">
    <property type="entry name" value="HisRS-like_core"/>
    <property type="match status" value="1"/>
</dbReference>
<dbReference type="Gene3D" id="3.40.50.800">
    <property type="entry name" value="Anticodon-binding domain"/>
    <property type="match status" value="1"/>
</dbReference>
<dbReference type="Gene3D" id="3.30.930.10">
    <property type="entry name" value="Bira Bifunctional Protein, Domain 2"/>
    <property type="match status" value="1"/>
</dbReference>
<dbReference type="HAMAP" id="MF_00127">
    <property type="entry name" value="His_tRNA_synth"/>
    <property type="match status" value="1"/>
</dbReference>
<dbReference type="InterPro" id="IPR006195">
    <property type="entry name" value="aa-tRNA-synth_II"/>
</dbReference>
<dbReference type="InterPro" id="IPR045864">
    <property type="entry name" value="aa-tRNA-synth_II/BPL/LPL"/>
</dbReference>
<dbReference type="InterPro" id="IPR004154">
    <property type="entry name" value="Anticodon-bd"/>
</dbReference>
<dbReference type="InterPro" id="IPR036621">
    <property type="entry name" value="Anticodon-bd_dom_sf"/>
</dbReference>
<dbReference type="InterPro" id="IPR015807">
    <property type="entry name" value="His-tRNA-ligase"/>
</dbReference>
<dbReference type="InterPro" id="IPR041715">
    <property type="entry name" value="HisRS-like_core"/>
</dbReference>
<dbReference type="InterPro" id="IPR004516">
    <property type="entry name" value="HisRS/HisZ"/>
</dbReference>
<dbReference type="NCBIfam" id="TIGR00442">
    <property type="entry name" value="hisS"/>
    <property type="match status" value="1"/>
</dbReference>
<dbReference type="PANTHER" id="PTHR43707:SF1">
    <property type="entry name" value="HISTIDINE--TRNA LIGASE, MITOCHONDRIAL-RELATED"/>
    <property type="match status" value="1"/>
</dbReference>
<dbReference type="PANTHER" id="PTHR43707">
    <property type="entry name" value="HISTIDYL-TRNA SYNTHETASE"/>
    <property type="match status" value="1"/>
</dbReference>
<dbReference type="Pfam" id="PF03129">
    <property type="entry name" value="HGTP_anticodon"/>
    <property type="match status" value="1"/>
</dbReference>
<dbReference type="Pfam" id="PF13393">
    <property type="entry name" value="tRNA-synt_His"/>
    <property type="match status" value="1"/>
</dbReference>
<dbReference type="PIRSF" id="PIRSF001549">
    <property type="entry name" value="His-tRNA_synth"/>
    <property type="match status" value="1"/>
</dbReference>
<dbReference type="SUPFAM" id="SSF52954">
    <property type="entry name" value="Class II aaRS ABD-related"/>
    <property type="match status" value="1"/>
</dbReference>
<dbReference type="SUPFAM" id="SSF55681">
    <property type="entry name" value="Class II aaRS and biotin synthetases"/>
    <property type="match status" value="1"/>
</dbReference>
<dbReference type="PROSITE" id="PS50862">
    <property type="entry name" value="AA_TRNA_LIGASE_II"/>
    <property type="match status" value="1"/>
</dbReference>
<sequence>MINPLRGMKDLTFDEAQRFVHIVKTAITIAKRYGYSYIETPILEETALFKRSVGDSSDIVSKEMYQFEDKGGNDVCMRPEGTAGVVRAFISAKLDRQPVKQKFYYYGPMFRYERPQKGRLREFHQFGCESFGEASVYEDFTIIIMISQIFQALGIGFELKINSLGCPECMPPYRQNLVGFLTEISEDLCTDCNRRIGMNPIRVLDCKNEACQSLLKQSPKLIENLCEHCDTDFKKLTVLLDDAGIAYEVDTNLVRGLDYYNKTAFEFVSNEIGSQSAIAGGGRYDKLVEYLDGKPTPAVGFAIGIERIMELVQMPETKKEGYYMGAMIPEAIEKIIMLGNRKRATDKVTVEYSSKGFKSHMKGVDKANARYALLIGEDELKNGTVWLKDLETKEEKSILLSEV</sequence>
<feature type="chain" id="PRO_1000016469" description="Histidine--tRNA ligase">
    <location>
        <begin position="1"/>
        <end position="403"/>
    </location>
</feature>
<proteinExistence type="inferred from homology"/>
<organism>
    <name type="scientific">Sulfurovum sp. (strain NBC37-1)</name>
    <dbReference type="NCBI Taxonomy" id="387093"/>
    <lineage>
        <taxon>Bacteria</taxon>
        <taxon>Pseudomonadati</taxon>
        <taxon>Campylobacterota</taxon>
        <taxon>Epsilonproteobacteria</taxon>
        <taxon>Campylobacterales</taxon>
        <taxon>Sulfurovaceae</taxon>
        <taxon>Sulfurovum</taxon>
    </lineage>
</organism>
<comment type="catalytic activity">
    <reaction evidence="1">
        <text>tRNA(His) + L-histidine + ATP = L-histidyl-tRNA(His) + AMP + diphosphate + H(+)</text>
        <dbReference type="Rhea" id="RHEA:17313"/>
        <dbReference type="Rhea" id="RHEA-COMP:9665"/>
        <dbReference type="Rhea" id="RHEA-COMP:9689"/>
        <dbReference type="ChEBI" id="CHEBI:15378"/>
        <dbReference type="ChEBI" id="CHEBI:30616"/>
        <dbReference type="ChEBI" id="CHEBI:33019"/>
        <dbReference type="ChEBI" id="CHEBI:57595"/>
        <dbReference type="ChEBI" id="CHEBI:78442"/>
        <dbReference type="ChEBI" id="CHEBI:78527"/>
        <dbReference type="ChEBI" id="CHEBI:456215"/>
        <dbReference type="EC" id="6.1.1.21"/>
    </reaction>
</comment>
<comment type="subunit">
    <text evidence="1">Homodimer.</text>
</comment>
<comment type="subcellular location">
    <subcellularLocation>
        <location evidence="1">Cytoplasm</location>
    </subcellularLocation>
</comment>
<comment type="similarity">
    <text evidence="1">Belongs to the class-II aminoacyl-tRNA synthetase family.</text>
</comment>
<accession>A6Q9Z9</accession>
<gene>
    <name evidence="1" type="primary">hisS</name>
    <name type="ordered locus">SUN_1355</name>
</gene>
<keyword id="KW-0030">Aminoacyl-tRNA synthetase</keyword>
<keyword id="KW-0067">ATP-binding</keyword>
<keyword id="KW-0963">Cytoplasm</keyword>
<keyword id="KW-0436">Ligase</keyword>
<keyword id="KW-0547">Nucleotide-binding</keyword>
<keyword id="KW-0648">Protein biosynthesis</keyword>
<name>SYH_SULNB</name>
<evidence type="ECO:0000255" key="1">
    <source>
        <dbReference type="HAMAP-Rule" id="MF_00127"/>
    </source>
</evidence>
<reference key="1">
    <citation type="journal article" date="2007" name="Proc. Natl. Acad. Sci. U.S.A.">
        <title>Deep-sea vent epsilon-proteobacterial genomes provide insights into emergence of pathogens.</title>
        <authorList>
            <person name="Nakagawa S."/>
            <person name="Takaki Y."/>
            <person name="Shimamura S."/>
            <person name="Reysenbach A.-L."/>
            <person name="Takai K."/>
            <person name="Horikoshi K."/>
        </authorList>
    </citation>
    <scope>NUCLEOTIDE SEQUENCE [LARGE SCALE GENOMIC DNA]</scope>
    <source>
        <strain>NBC37-1</strain>
    </source>
</reference>